<dbReference type="EC" id="4.2.2.2"/>
<dbReference type="EMBL" id="AL022140">
    <property type="protein sequence ID" value="CAA18112.1"/>
    <property type="molecule type" value="Genomic_DNA"/>
</dbReference>
<dbReference type="EMBL" id="AL161556">
    <property type="protein sequence ID" value="CAB79164.1"/>
    <property type="molecule type" value="Genomic_DNA"/>
</dbReference>
<dbReference type="EMBL" id="CP002687">
    <property type="protein sequence ID" value="AEE84548.1"/>
    <property type="molecule type" value="Genomic_DNA"/>
</dbReference>
<dbReference type="PIR" id="T49116">
    <property type="entry name" value="T49116"/>
</dbReference>
<dbReference type="RefSeq" id="NP_193940.1">
    <property type="nucleotide sequence ID" value="NM_118330.1"/>
</dbReference>
<dbReference type="SMR" id="O65457"/>
<dbReference type="FunCoup" id="O65457">
    <property type="interactions" value="107"/>
</dbReference>
<dbReference type="STRING" id="3702.O65457"/>
<dbReference type="CAZy" id="PL1">
    <property type="family name" value="Polysaccharide Lyase Family 1"/>
</dbReference>
<dbReference type="PaxDb" id="3702-AT4G22090.1"/>
<dbReference type="ProteomicsDB" id="236640"/>
<dbReference type="EnsemblPlants" id="AT4G22090.1">
    <property type="protein sequence ID" value="AT4G22090.1"/>
    <property type="gene ID" value="AT4G22090"/>
</dbReference>
<dbReference type="GeneID" id="828298"/>
<dbReference type="Gramene" id="AT4G22090.1">
    <property type="protein sequence ID" value="AT4G22090.1"/>
    <property type="gene ID" value="AT4G22090"/>
</dbReference>
<dbReference type="KEGG" id="ath:AT4G22090"/>
<dbReference type="Araport" id="AT4G22090"/>
<dbReference type="TAIR" id="AT4G22090"/>
<dbReference type="eggNOG" id="ENOG502QSYA">
    <property type="taxonomic scope" value="Eukaryota"/>
</dbReference>
<dbReference type="HOGENOM" id="CLU_026608_0_1_1"/>
<dbReference type="InParanoid" id="O65457"/>
<dbReference type="OMA" id="VQHVNHI"/>
<dbReference type="PhylomeDB" id="O65457"/>
<dbReference type="BioCyc" id="ARA:AT4G22090-MONOMER"/>
<dbReference type="UniPathway" id="UPA00545">
    <property type="reaction ID" value="UER00824"/>
</dbReference>
<dbReference type="PRO" id="PR:O65457"/>
<dbReference type="Proteomes" id="UP000006548">
    <property type="component" value="Chromosome 4"/>
</dbReference>
<dbReference type="ExpressionAtlas" id="O65457">
    <property type="expression patterns" value="baseline"/>
</dbReference>
<dbReference type="GO" id="GO:0046872">
    <property type="term" value="F:metal ion binding"/>
    <property type="evidence" value="ECO:0007669"/>
    <property type="project" value="UniProtKB-KW"/>
</dbReference>
<dbReference type="GO" id="GO:0030570">
    <property type="term" value="F:pectate lyase activity"/>
    <property type="evidence" value="ECO:0007669"/>
    <property type="project" value="UniProtKB-EC"/>
</dbReference>
<dbReference type="GO" id="GO:0045490">
    <property type="term" value="P:pectin catabolic process"/>
    <property type="evidence" value="ECO:0007669"/>
    <property type="project" value="UniProtKB-UniPathway"/>
</dbReference>
<dbReference type="Gene3D" id="2.160.20.10">
    <property type="entry name" value="Single-stranded right-handed beta-helix, Pectin lyase-like"/>
    <property type="match status" value="1"/>
</dbReference>
<dbReference type="InterPro" id="IPR018082">
    <property type="entry name" value="AmbAllergen"/>
</dbReference>
<dbReference type="InterPro" id="IPR002022">
    <property type="entry name" value="Pec_lyase"/>
</dbReference>
<dbReference type="InterPro" id="IPR012334">
    <property type="entry name" value="Pectin_lyas_fold"/>
</dbReference>
<dbReference type="InterPro" id="IPR011050">
    <property type="entry name" value="Pectin_lyase_fold/virulence"/>
</dbReference>
<dbReference type="InterPro" id="IPR045032">
    <property type="entry name" value="PEL"/>
</dbReference>
<dbReference type="PANTHER" id="PTHR31683:SF80">
    <property type="entry name" value="PECTATE LYASE 16-RELATED"/>
    <property type="match status" value="1"/>
</dbReference>
<dbReference type="PANTHER" id="PTHR31683">
    <property type="entry name" value="PECTATE LYASE 18-RELATED"/>
    <property type="match status" value="1"/>
</dbReference>
<dbReference type="Pfam" id="PF00544">
    <property type="entry name" value="Pectate_lyase_4"/>
    <property type="match status" value="1"/>
</dbReference>
<dbReference type="PRINTS" id="PR00807">
    <property type="entry name" value="AMBALLERGEN"/>
</dbReference>
<dbReference type="SMART" id="SM00656">
    <property type="entry name" value="Amb_all"/>
    <property type="match status" value="1"/>
</dbReference>
<dbReference type="SUPFAM" id="SSF51126">
    <property type="entry name" value="Pectin lyase-like"/>
    <property type="match status" value="1"/>
</dbReference>
<name>PLY17_ARATH</name>
<gene>
    <name type="ordered locus">At4g22090</name>
    <name type="ORF">F1N20.190</name>
</gene>
<sequence>MTHFTVSCLLVALFLCQSLVHAAYNGYYGYSPAAAPYPAEEPQNIMNPVDSCWRLKSDWDVNREDLADCAVGFGSSTLGGKKGNIYVVTNPYDNAQNPHPGSLRYGVIQAKPLWITFAKDMVITLANELMVNSYKTIDGRGAKVEIAYGPCITIQDVTNVIVHGISIHDCKPGKSGKVRSSPTHVGHRKGSDGDAITIFGSSNVWIDHCYLASCTDGLIDVIHASTAITISNNYFTQHDKVMLLGHNDNFVKDVKMKVTVAFNHFGPGLVERMPRVRRGYAHVANNRYDKWIMYAIGGSADPTIFSEGNYFIASDKSYSKEVTKREVKGGWNNWRWRTSNDVFKNGAFFVPSGYGSIPLPYSSAQRFTVAPGNLVPSLTADAGPLNCNRNGPCY</sequence>
<evidence type="ECO:0000250" key="1"/>
<evidence type="ECO:0000255" key="2"/>
<evidence type="ECO:0000305" key="3"/>
<accession>O65457</accession>
<comment type="catalytic activity">
    <reaction>
        <text>Eliminative cleavage of (1-&gt;4)-alpha-D-galacturonan to give oligosaccharides with 4-deoxy-alpha-D-galact-4-enuronosyl groups at their non-reducing ends.</text>
        <dbReference type="EC" id="4.2.2.2"/>
    </reaction>
</comment>
<comment type="cofactor">
    <cofactor evidence="1">
        <name>Ca(2+)</name>
        <dbReference type="ChEBI" id="CHEBI:29108"/>
    </cofactor>
    <text evidence="1">Binds 1 Ca(2+) ion. Required for its activity.</text>
</comment>
<comment type="pathway">
    <text>Glycan metabolism; pectin degradation; 2-dehydro-3-deoxy-D-gluconate from pectin: step 2/5.</text>
</comment>
<comment type="similarity">
    <text evidence="3">Belongs to the polysaccharide lyase 1 family.</text>
</comment>
<feature type="signal peptide" evidence="2">
    <location>
        <begin position="1"/>
        <end position="22"/>
    </location>
</feature>
<feature type="chain" id="PRO_0000024882" description="Putative pectate lyase 17">
    <location>
        <begin position="23"/>
        <end position="394"/>
    </location>
</feature>
<feature type="active site" evidence="2">
    <location>
        <position position="272"/>
    </location>
</feature>
<feature type="binding site" evidence="1">
    <location>
        <position position="192"/>
    </location>
    <ligand>
        <name>Ca(2+)</name>
        <dbReference type="ChEBI" id="CHEBI:29108"/>
    </ligand>
</feature>
<feature type="binding site" evidence="1">
    <location>
        <position position="216"/>
    </location>
    <ligand>
        <name>Ca(2+)</name>
        <dbReference type="ChEBI" id="CHEBI:29108"/>
    </ligand>
</feature>
<feature type="binding site" evidence="1">
    <location>
        <position position="220"/>
    </location>
    <ligand>
        <name>Ca(2+)</name>
        <dbReference type="ChEBI" id="CHEBI:29108"/>
    </ligand>
</feature>
<organism>
    <name type="scientific">Arabidopsis thaliana</name>
    <name type="common">Mouse-ear cress</name>
    <dbReference type="NCBI Taxonomy" id="3702"/>
    <lineage>
        <taxon>Eukaryota</taxon>
        <taxon>Viridiplantae</taxon>
        <taxon>Streptophyta</taxon>
        <taxon>Embryophyta</taxon>
        <taxon>Tracheophyta</taxon>
        <taxon>Spermatophyta</taxon>
        <taxon>Magnoliopsida</taxon>
        <taxon>eudicotyledons</taxon>
        <taxon>Gunneridae</taxon>
        <taxon>Pentapetalae</taxon>
        <taxon>rosids</taxon>
        <taxon>malvids</taxon>
        <taxon>Brassicales</taxon>
        <taxon>Brassicaceae</taxon>
        <taxon>Camelineae</taxon>
        <taxon>Arabidopsis</taxon>
    </lineage>
</organism>
<keyword id="KW-0106">Calcium</keyword>
<keyword id="KW-0456">Lyase</keyword>
<keyword id="KW-0479">Metal-binding</keyword>
<keyword id="KW-1185">Reference proteome</keyword>
<keyword id="KW-0732">Signal</keyword>
<reference key="1">
    <citation type="journal article" date="1999" name="Nature">
        <title>Sequence and analysis of chromosome 4 of the plant Arabidopsis thaliana.</title>
        <authorList>
            <person name="Mayer K.F.X."/>
            <person name="Schueller C."/>
            <person name="Wambutt R."/>
            <person name="Murphy G."/>
            <person name="Volckaert G."/>
            <person name="Pohl T."/>
            <person name="Duesterhoeft A."/>
            <person name="Stiekema W."/>
            <person name="Entian K.-D."/>
            <person name="Terryn N."/>
            <person name="Harris B."/>
            <person name="Ansorge W."/>
            <person name="Brandt P."/>
            <person name="Grivell L.A."/>
            <person name="Rieger M."/>
            <person name="Weichselgartner M."/>
            <person name="de Simone V."/>
            <person name="Obermaier B."/>
            <person name="Mache R."/>
            <person name="Mueller M."/>
            <person name="Kreis M."/>
            <person name="Delseny M."/>
            <person name="Puigdomenech P."/>
            <person name="Watson M."/>
            <person name="Schmidtheini T."/>
            <person name="Reichert B."/>
            <person name="Portetelle D."/>
            <person name="Perez-Alonso M."/>
            <person name="Boutry M."/>
            <person name="Bancroft I."/>
            <person name="Vos P."/>
            <person name="Hoheisel J."/>
            <person name="Zimmermann W."/>
            <person name="Wedler H."/>
            <person name="Ridley P."/>
            <person name="Langham S.-A."/>
            <person name="McCullagh B."/>
            <person name="Bilham L."/>
            <person name="Robben J."/>
            <person name="van der Schueren J."/>
            <person name="Grymonprez B."/>
            <person name="Chuang Y.-J."/>
            <person name="Vandenbussche F."/>
            <person name="Braeken M."/>
            <person name="Weltjens I."/>
            <person name="Voet M."/>
            <person name="Bastiaens I."/>
            <person name="Aert R."/>
            <person name="Defoor E."/>
            <person name="Weitzenegger T."/>
            <person name="Bothe G."/>
            <person name="Ramsperger U."/>
            <person name="Hilbert H."/>
            <person name="Braun M."/>
            <person name="Holzer E."/>
            <person name="Brandt A."/>
            <person name="Peters S."/>
            <person name="van Staveren M."/>
            <person name="Dirkse W."/>
            <person name="Mooijman P."/>
            <person name="Klein Lankhorst R."/>
            <person name="Rose M."/>
            <person name="Hauf J."/>
            <person name="Koetter P."/>
            <person name="Berneiser S."/>
            <person name="Hempel S."/>
            <person name="Feldpausch M."/>
            <person name="Lamberth S."/>
            <person name="Van den Daele H."/>
            <person name="De Keyser A."/>
            <person name="Buysshaert C."/>
            <person name="Gielen J."/>
            <person name="Villarroel R."/>
            <person name="De Clercq R."/>
            <person name="van Montagu M."/>
            <person name="Rogers J."/>
            <person name="Cronin A."/>
            <person name="Quail M.A."/>
            <person name="Bray-Allen S."/>
            <person name="Clark L."/>
            <person name="Doggett J."/>
            <person name="Hall S."/>
            <person name="Kay M."/>
            <person name="Lennard N."/>
            <person name="McLay K."/>
            <person name="Mayes R."/>
            <person name="Pettett A."/>
            <person name="Rajandream M.A."/>
            <person name="Lyne M."/>
            <person name="Benes V."/>
            <person name="Rechmann S."/>
            <person name="Borkova D."/>
            <person name="Bloecker H."/>
            <person name="Scharfe M."/>
            <person name="Grimm M."/>
            <person name="Loehnert T.-H."/>
            <person name="Dose S."/>
            <person name="de Haan M."/>
            <person name="Maarse A.C."/>
            <person name="Schaefer M."/>
            <person name="Mueller-Auer S."/>
            <person name="Gabel C."/>
            <person name="Fuchs M."/>
            <person name="Fartmann B."/>
            <person name="Granderath K."/>
            <person name="Dauner D."/>
            <person name="Herzl A."/>
            <person name="Neumann S."/>
            <person name="Argiriou A."/>
            <person name="Vitale D."/>
            <person name="Liguori R."/>
            <person name="Piravandi E."/>
            <person name="Massenet O."/>
            <person name="Quigley F."/>
            <person name="Clabauld G."/>
            <person name="Muendlein A."/>
            <person name="Felber R."/>
            <person name="Schnabl S."/>
            <person name="Hiller R."/>
            <person name="Schmidt W."/>
            <person name="Lecharny A."/>
            <person name="Aubourg S."/>
            <person name="Chefdor F."/>
            <person name="Cooke R."/>
            <person name="Berger C."/>
            <person name="Monfort A."/>
            <person name="Casacuberta E."/>
            <person name="Gibbons T."/>
            <person name="Weber N."/>
            <person name="Vandenbol M."/>
            <person name="Bargues M."/>
            <person name="Terol J."/>
            <person name="Torres A."/>
            <person name="Perez-Perez A."/>
            <person name="Purnelle B."/>
            <person name="Bent E."/>
            <person name="Johnson S."/>
            <person name="Tacon D."/>
            <person name="Jesse T."/>
            <person name="Heijnen L."/>
            <person name="Schwarz S."/>
            <person name="Scholler P."/>
            <person name="Heber S."/>
            <person name="Francs P."/>
            <person name="Bielke C."/>
            <person name="Frishman D."/>
            <person name="Haase D."/>
            <person name="Lemcke K."/>
            <person name="Mewes H.-W."/>
            <person name="Stocker S."/>
            <person name="Zaccaria P."/>
            <person name="Bevan M."/>
            <person name="Wilson R.K."/>
            <person name="de la Bastide M."/>
            <person name="Habermann K."/>
            <person name="Parnell L."/>
            <person name="Dedhia N."/>
            <person name="Gnoj L."/>
            <person name="Schutz K."/>
            <person name="Huang E."/>
            <person name="Spiegel L."/>
            <person name="Sekhon M."/>
            <person name="Murray J."/>
            <person name="Sheet P."/>
            <person name="Cordes M."/>
            <person name="Abu-Threideh J."/>
            <person name="Stoneking T."/>
            <person name="Kalicki J."/>
            <person name="Graves T."/>
            <person name="Harmon G."/>
            <person name="Edwards J."/>
            <person name="Latreille P."/>
            <person name="Courtney L."/>
            <person name="Cloud J."/>
            <person name="Abbott A."/>
            <person name="Scott K."/>
            <person name="Johnson D."/>
            <person name="Minx P."/>
            <person name="Bentley D."/>
            <person name="Fulton B."/>
            <person name="Miller N."/>
            <person name="Greco T."/>
            <person name="Kemp K."/>
            <person name="Kramer J."/>
            <person name="Fulton L."/>
            <person name="Mardis E."/>
            <person name="Dante M."/>
            <person name="Pepin K."/>
            <person name="Hillier L.W."/>
            <person name="Nelson J."/>
            <person name="Spieth J."/>
            <person name="Ryan E."/>
            <person name="Andrews S."/>
            <person name="Geisel C."/>
            <person name="Layman D."/>
            <person name="Du H."/>
            <person name="Ali J."/>
            <person name="Berghoff A."/>
            <person name="Jones K."/>
            <person name="Drone K."/>
            <person name="Cotton M."/>
            <person name="Joshu C."/>
            <person name="Antonoiu B."/>
            <person name="Zidanic M."/>
            <person name="Strong C."/>
            <person name="Sun H."/>
            <person name="Lamar B."/>
            <person name="Yordan C."/>
            <person name="Ma P."/>
            <person name="Zhong J."/>
            <person name="Preston R."/>
            <person name="Vil D."/>
            <person name="Shekher M."/>
            <person name="Matero A."/>
            <person name="Shah R."/>
            <person name="Swaby I.K."/>
            <person name="O'Shaughnessy A."/>
            <person name="Rodriguez M."/>
            <person name="Hoffman J."/>
            <person name="Till S."/>
            <person name="Granat S."/>
            <person name="Shohdy N."/>
            <person name="Hasegawa A."/>
            <person name="Hameed A."/>
            <person name="Lodhi M."/>
            <person name="Johnson A."/>
            <person name="Chen E."/>
            <person name="Marra M.A."/>
            <person name="Martienssen R."/>
            <person name="McCombie W.R."/>
        </authorList>
    </citation>
    <scope>NUCLEOTIDE SEQUENCE [LARGE SCALE GENOMIC DNA]</scope>
    <source>
        <strain>cv. Columbia</strain>
    </source>
</reference>
<reference key="2">
    <citation type="journal article" date="2017" name="Plant J.">
        <title>Araport11: a complete reannotation of the Arabidopsis thaliana reference genome.</title>
        <authorList>
            <person name="Cheng C.Y."/>
            <person name="Krishnakumar V."/>
            <person name="Chan A.P."/>
            <person name="Thibaud-Nissen F."/>
            <person name="Schobel S."/>
            <person name="Town C.D."/>
        </authorList>
    </citation>
    <scope>GENOME REANNOTATION</scope>
    <source>
        <strain>cv. Columbia</strain>
    </source>
</reference>
<proteinExistence type="inferred from homology"/>
<protein>
    <recommendedName>
        <fullName>Putative pectate lyase 17</fullName>
        <ecNumber>4.2.2.2</ecNumber>
    </recommendedName>
</protein>